<comment type="function">
    <text evidence="1">PsaA and PsaB bind P700, the primary electron donor of photosystem I (PSI), as well as the electron acceptors A0, A1 and FX. PSI is a plastocyanin-ferredoxin oxidoreductase, converting photonic excitation into a charge separation, which transfers an electron from the donor P700 chlorophyll pair to the spectroscopically characterized acceptors A0, A1, FX, FA and FB in turn. Oxidized P700 is reduced on the lumenal side of the thylakoid membrane by plastocyanin.</text>
</comment>
<comment type="catalytic activity">
    <reaction evidence="1">
        <text>reduced [plastocyanin] + hnu + oxidized [2Fe-2S]-[ferredoxin] = oxidized [plastocyanin] + reduced [2Fe-2S]-[ferredoxin]</text>
        <dbReference type="Rhea" id="RHEA:30407"/>
        <dbReference type="Rhea" id="RHEA-COMP:10000"/>
        <dbReference type="Rhea" id="RHEA-COMP:10001"/>
        <dbReference type="Rhea" id="RHEA-COMP:10039"/>
        <dbReference type="Rhea" id="RHEA-COMP:10040"/>
        <dbReference type="ChEBI" id="CHEBI:29036"/>
        <dbReference type="ChEBI" id="CHEBI:30212"/>
        <dbReference type="ChEBI" id="CHEBI:33737"/>
        <dbReference type="ChEBI" id="CHEBI:33738"/>
        <dbReference type="ChEBI" id="CHEBI:49552"/>
        <dbReference type="EC" id="1.97.1.12"/>
    </reaction>
</comment>
<comment type="cofactor">
    <text evidence="1">P700 is a chlorophyll a/chlorophyll a' dimer, A0 is one or more chlorophyll a, A1 is one or both phylloquinones and FX is a shared 4Fe-4S iron-sulfur center.</text>
</comment>
<comment type="subunit">
    <text evidence="1">The PsaA/B heterodimer binds the P700 chlorophyll special pair and subsequent electron acceptors. PSI consists of a core antenna complex that captures photons, and an electron transfer chain that converts photonic excitation into a charge separation. The eukaryotic PSI reaction center is composed of at least 11 subunits.</text>
</comment>
<comment type="subcellular location">
    <subcellularLocation>
        <location evidence="1">Plastid</location>
        <location evidence="1">Chloroplast thylakoid membrane</location>
        <topology evidence="1">Multi-pass membrane protein</topology>
    </subcellularLocation>
</comment>
<comment type="similarity">
    <text evidence="1">Belongs to the PsaA/PsaB family.</text>
</comment>
<protein>
    <recommendedName>
        <fullName evidence="1">Photosystem I P700 chlorophyll a apoprotein A2</fullName>
        <ecNumber evidence="1">1.97.1.12</ecNumber>
    </recommendedName>
    <alternativeName>
        <fullName evidence="1">PSI-B</fullName>
    </alternativeName>
    <alternativeName>
        <fullName evidence="1">PsaB</fullName>
    </alternativeName>
</protein>
<accession>A4QKA4</accession>
<proteinExistence type="inferred from homology"/>
<dbReference type="EC" id="1.97.1.12" evidence="1"/>
<dbReference type="EMBL" id="AP009370">
    <property type="protein sequence ID" value="BAF50109.1"/>
    <property type="molecule type" value="Genomic_DNA"/>
</dbReference>
<dbReference type="RefSeq" id="YP_001123285.1">
    <property type="nucleotide sequence ID" value="NC_009269.1"/>
</dbReference>
<dbReference type="SMR" id="A4QKA4"/>
<dbReference type="GeneID" id="4961829"/>
<dbReference type="GO" id="GO:0009535">
    <property type="term" value="C:chloroplast thylakoid membrane"/>
    <property type="evidence" value="ECO:0007669"/>
    <property type="project" value="UniProtKB-SubCell"/>
</dbReference>
<dbReference type="GO" id="GO:0009522">
    <property type="term" value="C:photosystem I"/>
    <property type="evidence" value="ECO:0007669"/>
    <property type="project" value="UniProtKB-KW"/>
</dbReference>
<dbReference type="GO" id="GO:0051539">
    <property type="term" value="F:4 iron, 4 sulfur cluster binding"/>
    <property type="evidence" value="ECO:0007669"/>
    <property type="project" value="UniProtKB-KW"/>
</dbReference>
<dbReference type="GO" id="GO:0016168">
    <property type="term" value="F:chlorophyll binding"/>
    <property type="evidence" value="ECO:0007669"/>
    <property type="project" value="UniProtKB-KW"/>
</dbReference>
<dbReference type="GO" id="GO:0009055">
    <property type="term" value="F:electron transfer activity"/>
    <property type="evidence" value="ECO:0007669"/>
    <property type="project" value="UniProtKB-UniRule"/>
</dbReference>
<dbReference type="GO" id="GO:0000287">
    <property type="term" value="F:magnesium ion binding"/>
    <property type="evidence" value="ECO:0007669"/>
    <property type="project" value="UniProtKB-UniRule"/>
</dbReference>
<dbReference type="GO" id="GO:0016491">
    <property type="term" value="F:oxidoreductase activity"/>
    <property type="evidence" value="ECO:0007669"/>
    <property type="project" value="UniProtKB-KW"/>
</dbReference>
<dbReference type="GO" id="GO:0015979">
    <property type="term" value="P:photosynthesis"/>
    <property type="evidence" value="ECO:0007669"/>
    <property type="project" value="UniProtKB-UniRule"/>
</dbReference>
<dbReference type="FunFam" id="1.20.1130.10:FF:000001">
    <property type="entry name" value="Photosystem I P700 chlorophyll a apoprotein A2"/>
    <property type="match status" value="1"/>
</dbReference>
<dbReference type="Gene3D" id="1.20.1130.10">
    <property type="entry name" value="Photosystem I PsaA/PsaB"/>
    <property type="match status" value="1"/>
</dbReference>
<dbReference type="HAMAP" id="MF_00482">
    <property type="entry name" value="PSI_PsaB"/>
    <property type="match status" value="1"/>
</dbReference>
<dbReference type="InterPro" id="IPR001280">
    <property type="entry name" value="PSI_PsaA/B"/>
</dbReference>
<dbReference type="InterPro" id="IPR020586">
    <property type="entry name" value="PSI_PsaA/B_CS"/>
</dbReference>
<dbReference type="InterPro" id="IPR036408">
    <property type="entry name" value="PSI_PsaA/B_sf"/>
</dbReference>
<dbReference type="InterPro" id="IPR006244">
    <property type="entry name" value="PSI_PsaB"/>
</dbReference>
<dbReference type="NCBIfam" id="TIGR01336">
    <property type="entry name" value="psaB"/>
    <property type="match status" value="1"/>
</dbReference>
<dbReference type="PANTHER" id="PTHR30128">
    <property type="entry name" value="OUTER MEMBRANE PROTEIN, OMPA-RELATED"/>
    <property type="match status" value="1"/>
</dbReference>
<dbReference type="PANTHER" id="PTHR30128:SF19">
    <property type="entry name" value="PHOTOSYSTEM I P700 CHLOROPHYLL A APOPROTEIN A1-RELATED"/>
    <property type="match status" value="1"/>
</dbReference>
<dbReference type="Pfam" id="PF00223">
    <property type="entry name" value="PsaA_PsaB"/>
    <property type="match status" value="1"/>
</dbReference>
<dbReference type="PIRSF" id="PIRSF002905">
    <property type="entry name" value="PSI_A"/>
    <property type="match status" value="1"/>
</dbReference>
<dbReference type="PRINTS" id="PR00257">
    <property type="entry name" value="PHOTSYSPSAAB"/>
</dbReference>
<dbReference type="SUPFAM" id="SSF81558">
    <property type="entry name" value="Photosystem I subunits PsaA/PsaB"/>
    <property type="match status" value="1"/>
</dbReference>
<dbReference type="PROSITE" id="PS00419">
    <property type="entry name" value="PHOTOSYSTEM_I_PSAAB"/>
    <property type="match status" value="1"/>
</dbReference>
<reference key="1">
    <citation type="submission" date="2007-03" db="EMBL/GenBank/DDBJ databases">
        <title>Sequencing analysis of Barbarea verna chloroplast DNA.</title>
        <authorList>
            <person name="Hosouchi T."/>
            <person name="Tsuruoka H."/>
            <person name="Kotani H."/>
        </authorList>
    </citation>
    <scope>NUCLEOTIDE SEQUENCE [LARGE SCALE GENOMIC DNA]</scope>
</reference>
<keyword id="KW-0004">4Fe-4S</keyword>
<keyword id="KW-0148">Chlorophyll</keyword>
<keyword id="KW-0150">Chloroplast</keyword>
<keyword id="KW-0157">Chromophore</keyword>
<keyword id="KW-0249">Electron transport</keyword>
<keyword id="KW-0408">Iron</keyword>
<keyword id="KW-0411">Iron-sulfur</keyword>
<keyword id="KW-0460">Magnesium</keyword>
<keyword id="KW-0472">Membrane</keyword>
<keyword id="KW-0479">Metal-binding</keyword>
<keyword id="KW-0560">Oxidoreductase</keyword>
<keyword id="KW-0602">Photosynthesis</keyword>
<keyword id="KW-0603">Photosystem I</keyword>
<keyword id="KW-0934">Plastid</keyword>
<keyword id="KW-0793">Thylakoid</keyword>
<keyword id="KW-0812">Transmembrane</keyword>
<keyword id="KW-1133">Transmembrane helix</keyword>
<keyword id="KW-0813">Transport</keyword>
<gene>
    <name evidence="1" type="primary">psaB</name>
</gene>
<sequence length="734" mass="82399">MALRFPRFSQGLAQDPTTRRIWFGIATAHDFESHDDITEERLYQNIFASHFGQLAIIFLWTSGNLFHVAWQGNFETWVQDPLHVRPIAHAIWDPHFGQPAVEAFTRGGALGPVNIAYSGVYQWWYTIGLRTNEDLYTGALFLLFLSALSLIGGWLHLQPKWKPRVSWFKNAESRLNHHLSGLFGVSSLAWTGHLVHVAIPASRGESVRWNNFLNVLPHPQGLGPLFTGQWNLYAQNPDSSSHLFGTSQGSGTAILTLLGGFHPQTQSLWLTDMAHHHLAIAILFLIAGHMYRTNFGIGHSIKDLLEAHIPPGGRLGRGHKGLYDTINNSIHFQLGLALASLGVITSLVAQHMYSLPAYAFIAQDFTTQAALYTHHQYIAGFIMTGAFAHGAIFFIRDYNPEQNEDNVLARMLDHKEAIISHLSWASLFLGFHTLGLYVHNDVMLAFGTPEKQILIEPIFAQWIQSAHGKTSYGFDVLLSSTSGPAFNAGRSIWLPGWLNAINENSNSLFLTIGPGDFLVHHAIALGLHTTTLILVKGALDARGSKLMPDKKDFGYSFPCDGPGRGGTCDISAWDAFYLAVFWMLNTIGWVTFYWHWKHITLWQGNVSQFNESSTYLMGWLRDYLWLNSSQLINGYNPFGMNSLSVWAWMFLFGHLVWATGFMFLISWRGYWQELIETLAWAHERTPLANLIRWKDKPVALSIVQARLVGLAHFSVGYIFTYAAFLIASTSGKFG</sequence>
<feature type="chain" id="PRO_0000300035" description="Photosystem I P700 chlorophyll a apoprotein A2">
    <location>
        <begin position="1"/>
        <end position="734"/>
    </location>
</feature>
<feature type="transmembrane region" description="Helical; Name=I" evidence="1">
    <location>
        <begin position="46"/>
        <end position="69"/>
    </location>
</feature>
<feature type="transmembrane region" description="Helical; Name=II" evidence="1">
    <location>
        <begin position="135"/>
        <end position="158"/>
    </location>
</feature>
<feature type="transmembrane region" description="Helical; Name=III" evidence="1">
    <location>
        <begin position="175"/>
        <end position="199"/>
    </location>
</feature>
<feature type="transmembrane region" description="Helical; Name=IV" evidence="1">
    <location>
        <begin position="273"/>
        <end position="291"/>
    </location>
</feature>
<feature type="transmembrane region" description="Helical; Name=V" evidence="1">
    <location>
        <begin position="330"/>
        <end position="353"/>
    </location>
</feature>
<feature type="transmembrane region" description="Helical; Name=VI" evidence="1">
    <location>
        <begin position="369"/>
        <end position="395"/>
    </location>
</feature>
<feature type="transmembrane region" description="Helical; Name=VII" evidence="1">
    <location>
        <begin position="417"/>
        <end position="439"/>
    </location>
</feature>
<feature type="transmembrane region" description="Helical; Name=VIII" evidence="1">
    <location>
        <begin position="517"/>
        <end position="535"/>
    </location>
</feature>
<feature type="transmembrane region" description="Helical; Name=IX" evidence="1">
    <location>
        <begin position="575"/>
        <end position="596"/>
    </location>
</feature>
<feature type="transmembrane region" description="Helical; Name=X" evidence="1">
    <location>
        <begin position="643"/>
        <end position="665"/>
    </location>
</feature>
<feature type="transmembrane region" description="Helical; Name=XI" evidence="1">
    <location>
        <begin position="707"/>
        <end position="727"/>
    </location>
</feature>
<feature type="binding site" evidence="1">
    <location>
        <position position="559"/>
    </location>
    <ligand>
        <name>[4Fe-4S] cluster</name>
        <dbReference type="ChEBI" id="CHEBI:49883"/>
        <note>ligand shared between dimeric partners</note>
    </ligand>
</feature>
<feature type="binding site" evidence="1">
    <location>
        <position position="568"/>
    </location>
    <ligand>
        <name>[4Fe-4S] cluster</name>
        <dbReference type="ChEBI" id="CHEBI:49883"/>
        <note>ligand shared between dimeric partners</note>
    </ligand>
</feature>
<feature type="binding site" description="axial binding residue" evidence="1">
    <location>
        <position position="654"/>
    </location>
    <ligand>
        <name>chlorophyll a</name>
        <dbReference type="ChEBI" id="CHEBI:58416"/>
        <label>B1</label>
    </ligand>
    <ligandPart>
        <name>Mg</name>
        <dbReference type="ChEBI" id="CHEBI:25107"/>
    </ligandPart>
</feature>
<feature type="binding site" description="axial binding residue" evidence="1">
    <location>
        <position position="662"/>
    </location>
    <ligand>
        <name>chlorophyll a</name>
        <dbReference type="ChEBI" id="CHEBI:58416"/>
        <label>B3</label>
    </ligand>
    <ligandPart>
        <name>Mg</name>
        <dbReference type="ChEBI" id="CHEBI:25107"/>
    </ligandPart>
</feature>
<feature type="binding site" evidence="1">
    <location>
        <position position="670"/>
    </location>
    <ligand>
        <name>chlorophyll a</name>
        <dbReference type="ChEBI" id="CHEBI:58416"/>
        <label>B3</label>
    </ligand>
</feature>
<feature type="binding site" evidence="1">
    <location>
        <position position="671"/>
    </location>
    <ligand>
        <name>phylloquinone</name>
        <dbReference type="ChEBI" id="CHEBI:18067"/>
        <label>B</label>
    </ligand>
</feature>
<geneLocation type="chloroplast"/>
<organism>
    <name type="scientific">Barbarea verna</name>
    <name type="common">Land cress</name>
    <name type="synonym">Erysimum vernum</name>
    <dbReference type="NCBI Taxonomy" id="50458"/>
    <lineage>
        <taxon>Eukaryota</taxon>
        <taxon>Viridiplantae</taxon>
        <taxon>Streptophyta</taxon>
        <taxon>Embryophyta</taxon>
        <taxon>Tracheophyta</taxon>
        <taxon>Spermatophyta</taxon>
        <taxon>Magnoliopsida</taxon>
        <taxon>eudicotyledons</taxon>
        <taxon>Gunneridae</taxon>
        <taxon>Pentapetalae</taxon>
        <taxon>rosids</taxon>
        <taxon>malvids</taxon>
        <taxon>Brassicales</taxon>
        <taxon>Brassicaceae</taxon>
        <taxon>Cardamineae</taxon>
        <taxon>Barbarea</taxon>
    </lineage>
</organism>
<evidence type="ECO:0000255" key="1">
    <source>
        <dbReference type="HAMAP-Rule" id="MF_00482"/>
    </source>
</evidence>
<name>PSAB_BARVE</name>